<evidence type="ECO:0000255" key="1">
    <source>
        <dbReference type="HAMAP-Rule" id="MF_01312"/>
    </source>
</evidence>
<proteinExistence type="inferred from homology"/>
<accession>A8A3I7</accession>
<reference key="1">
    <citation type="journal article" date="2008" name="J. Bacteriol.">
        <title>The pangenome structure of Escherichia coli: comparative genomic analysis of E. coli commensal and pathogenic isolates.</title>
        <authorList>
            <person name="Rasko D.A."/>
            <person name="Rosovitz M.J."/>
            <person name="Myers G.S.A."/>
            <person name="Mongodin E.F."/>
            <person name="Fricke W.F."/>
            <person name="Gajer P."/>
            <person name="Crabtree J."/>
            <person name="Sebaihia M."/>
            <person name="Thomson N.R."/>
            <person name="Chaudhuri R."/>
            <person name="Henderson I.R."/>
            <person name="Sperandio V."/>
            <person name="Ravel J."/>
        </authorList>
    </citation>
    <scope>NUCLEOTIDE SEQUENCE [LARGE SCALE GENOMIC DNA]</scope>
    <source>
        <strain>HS</strain>
    </source>
</reference>
<name>NORV_ECOHS</name>
<sequence length="479" mass="54264">MSIVVKNNIHWVGQRDWEVRDFHGTEYKTLRGSSYNSYLIREEKNVLIDTVDHKFSREFVQNLRNEIDLADIDYIVINHAEEDHAGALTELMAQIPDTPIYCTANAIDSINGHHHHPEWNFNVVKTGDTLDIGNGKQLIFVETPMLHWPDSMMTYLTGDAVLFSNDAFGQHYCDEHLFNDEVDQTELFEQCQRYYANILTPFSRLVTPKITEILGFNLPVDMIATSHGVVWRDNPTQIVELYLKWAADYQEDRITIFYDTMSNNTRMMADAIAQGIAETDPRVAVKIFNVARSDKNEILTNVFRSKGVLVGTSTMNNVMMPKIAGLVEEMTGLRFRNKRASAFGSHGWSGGAVDRLSTRLQDAGFEMSLSLKAKWRPDQDALELCREHGREIARQWALAPLPQSTVNTVVKEETSATTKSDLGPRMQCSVCQWIYDPAKGEPMQDVAPGTPWSEVPDNFLCPECSLGKDVFDELASEAK</sequence>
<organism>
    <name type="scientific">Escherichia coli O9:H4 (strain HS)</name>
    <dbReference type="NCBI Taxonomy" id="331112"/>
    <lineage>
        <taxon>Bacteria</taxon>
        <taxon>Pseudomonadati</taxon>
        <taxon>Pseudomonadota</taxon>
        <taxon>Gammaproteobacteria</taxon>
        <taxon>Enterobacterales</taxon>
        <taxon>Enterobacteriaceae</taxon>
        <taxon>Escherichia</taxon>
    </lineage>
</organism>
<comment type="function">
    <text evidence="1">Anaerobic nitric oxide reductase; uses NADH to detoxify nitric oxide (NO), protecting several 4Fe-4S NO-sensitive enzymes. Has at least 2 reductase partners, only one of which (NorW, flavorubredoxin reductase) has been identified. NO probably binds to the di-iron center; electrons enter from the NorW at rubredoxin and are transferred sequentially to the FMN center and the di-iron center. Also able to function as an aerobic oxygen reductase.</text>
</comment>
<comment type="cofactor">
    <cofactor evidence="1">
        <name>Fe cation</name>
        <dbReference type="ChEBI" id="CHEBI:24875"/>
    </cofactor>
    <text evidence="1">Binds 3 Fe cations per monomer.</text>
</comment>
<comment type="cofactor">
    <cofactor evidence="1">
        <name>FMN</name>
        <dbReference type="ChEBI" id="CHEBI:58210"/>
    </cofactor>
    <text evidence="1">Binds 1 FMN per monomer.</text>
</comment>
<comment type="pathway">
    <text evidence="1">Nitrogen metabolism; nitric oxide reduction.</text>
</comment>
<comment type="subunit">
    <text evidence="1">Homotetramer.</text>
</comment>
<comment type="subcellular location">
    <subcellularLocation>
        <location evidence="1">Cytoplasm</location>
    </subcellularLocation>
</comment>
<comment type="similarity">
    <text evidence="1">In the N-terminal section; belongs to the zinc metallo-hydrolase group 3 family.</text>
</comment>
<gene>
    <name evidence="1" type="primary">norV</name>
    <name evidence="1" type="synonym">flrD</name>
    <name type="ordered locus">EcHS_A2846</name>
</gene>
<feature type="chain" id="PRO_1000067508" description="Anaerobic nitric oxide reductase flavorubredoxin">
    <location>
        <begin position="1"/>
        <end position="479"/>
    </location>
</feature>
<feature type="domain" description="Flavodoxin-like" evidence="1">
    <location>
        <begin position="254"/>
        <end position="393"/>
    </location>
</feature>
<feature type="domain" description="Rubredoxin-like" evidence="1">
    <location>
        <begin position="423"/>
        <end position="474"/>
    </location>
</feature>
<feature type="region of interest" description="Zinc metallo-hydrolase">
    <location>
        <begin position="30"/>
        <end position="210"/>
    </location>
</feature>
<feature type="binding site" evidence="1">
    <location>
        <position position="79"/>
    </location>
    <ligand>
        <name>Fe cation</name>
        <dbReference type="ChEBI" id="CHEBI:24875"/>
        <label>1</label>
    </ligand>
</feature>
<feature type="binding site" evidence="1">
    <location>
        <position position="81"/>
    </location>
    <ligand>
        <name>Fe cation</name>
        <dbReference type="ChEBI" id="CHEBI:24875"/>
        <label>1</label>
    </ligand>
</feature>
<feature type="binding site" evidence="1">
    <location>
        <position position="83"/>
    </location>
    <ligand>
        <name>Fe cation</name>
        <dbReference type="ChEBI" id="CHEBI:24875"/>
        <label>2</label>
    </ligand>
</feature>
<feature type="binding site" evidence="1">
    <location>
        <position position="147"/>
    </location>
    <ligand>
        <name>Fe cation</name>
        <dbReference type="ChEBI" id="CHEBI:24875"/>
        <label>1</label>
    </ligand>
</feature>
<feature type="binding site" evidence="1">
    <location>
        <position position="166"/>
    </location>
    <ligand>
        <name>Fe cation</name>
        <dbReference type="ChEBI" id="CHEBI:24875"/>
        <label>1</label>
    </ligand>
</feature>
<feature type="binding site" evidence="1">
    <location>
        <position position="166"/>
    </location>
    <ligand>
        <name>Fe cation</name>
        <dbReference type="ChEBI" id="CHEBI:24875"/>
        <label>2</label>
    </ligand>
</feature>
<feature type="binding site" evidence="1">
    <location>
        <position position="227"/>
    </location>
    <ligand>
        <name>Fe cation</name>
        <dbReference type="ChEBI" id="CHEBI:24875"/>
        <label>2</label>
    </ligand>
</feature>
<feature type="binding site" evidence="1">
    <location>
        <begin position="260"/>
        <end position="264"/>
    </location>
    <ligand>
        <name>FMN</name>
        <dbReference type="ChEBI" id="CHEBI:58210"/>
    </ligand>
</feature>
<feature type="binding site" evidence="1">
    <location>
        <begin position="342"/>
        <end position="369"/>
    </location>
    <ligand>
        <name>FMN</name>
        <dbReference type="ChEBI" id="CHEBI:58210"/>
    </ligand>
</feature>
<feature type="binding site" evidence="1">
    <location>
        <position position="428"/>
    </location>
    <ligand>
        <name>Fe cation</name>
        <dbReference type="ChEBI" id="CHEBI:24875"/>
        <label>3</label>
    </ligand>
</feature>
<feature type="binding site" evidence="1">
    <location>
        <position position="431"/>
    </location>
    <ligand>
        <name>Fe cation</name>
        <dbReference type="ChEBI" id="CHEBI:24875"/>
        <label>3</label>
    </ligand>
</feature>
<feature type="binding site" evidence="1">
    <location>
        <position position="461"/>
    </location>
    <ligand>
        <name>Fe cation</name>
        <dbReference type="ChEBI" id="CHEBI:24875"/>
        <label>3</label>
    </ligand>
</feature>
<feature type="binding site" evidence="1">
    <location>
        <position position="464"/>
    </location>
    <ligand>
        <name>Fe cation</name>
        <dbReference type="ChEBI" id="CHEBI:24875"/>
        <label>3</label>
    </ligand>
</feature>
<protein>
    <recommendedName>
        <fullName evidence="1">Anaerobic nitric oxide reductase flavorubredoxin</fullName>
        <shortName evidence="1">FlRd</shortName>
        <shortName evidence="1">FlavoRb</shortName>
    </recommendedName>
</protein>
<dbReference type="EMBL" id="CP000802">
    <property type="protein sequence ID" value="ABV07091.1"/>
    <property type="molecule type" value="Genomic_DNA"/>
</dbReference>
<dbReference type="RefSeq" id="WP_000029618.1">
    <property type="nucleotide sequence ID" value="NC_009800.1"/>
</dbReference>
<dbReference type="BMRB" id="A8A3I7"/>
<dbReference type="SMR" id="A8A3I7"/>
<dbReference type="GeneID" id="93779301"/>
<dbReference type="KEGG" id="ecx:EcHS_A2846"/>
<dbReference type="HOGENOM" id="CLU_017490_0_1_6"/>
<dbReference type="UniPathway" id="UPA00638"/>
<dbReference type="GO" id="GO:0005737">
    <property type="term" value="C:cytoplasm"/>
    <property type="evidence" value="ECO:0007669"/>
    <property type="project" value="UniProtKB-SubCell"/>
</dbReference>
<dbReference type="GO" id="GO:0009055">
    <property type="term" value="F:electron transfer activity"/>
    <property type="evidence" value="ECO:0007669"/>
    <property type="project" value="UniProtKB-UniRule"/>
</dbReference>
<dbReference type="GO" id="GO:0010181">
    <property type="term" value="F:FMN binding"/>
    <property type="evidence" value="ECO:0007669"/>
    <property type="project" value="InterPro"/>
</dbReference>
<dbReference type="GO" id="GO:0005506">
    <property type="term" value="F:iron ion binding"/>
    <property type="evidence" value="ECO:0007669"/>
    <property type="project" value="InterPro"/>
</dbReference>
<dbReference type="GO" id="GO:0016966">
    <property type="term" value="F:nitric oxide reductase activity"/>
    <property type="evidence" value="ECO:0007669"/>
    <property type="project" value="InterPro"/>
</dbReference>
<dbReference type="CDD" id="cd07709">
    <property type="entry name" value="flavodiiron_proteins_MBL-fold"/>
    <property type="match status" value="1"/>
</dbReference>
<dbReference type="CDD" id="cd00730">
    <property type="entry name" value="rubredoxin"/>
    <property type="match status" value="1"/>
</dbReference>
<dbReference type="FunFam" id="2.20.28.10:FF:000010">
    <property type="entry name" value="Anaerobic nitric oxide reductase flavorubredoxin"/>
    <property type="match status" value="1"/>
</dbReference>
<dbReference type="FunFam" id="3.40.50.360:FF:000012">
    <property type="entry name" value="Anaerobic nitric oxide reductase flavorubredoxin"/>
    <property type="match status" value="1"/>
</dbReference>
<dbReference type="FunFam" id="3.60.15.10:FF:000009">
    <property type="entry name" value="Anaerobic nitric oxide reductase flavorubredoxin"/>
    <property type="match status" value="1"/>
</dbReference>
<dbReference type="Gene3D" id="2.20.28.10">
    <property type="match status" value="1"/>
</dbReference>
<dbReference type="Gene3D" id="3.40.50.360">
    <property type="match status" value="1"/>
</dbReference>
<dbReference type="Gene3D" id="3.60.15.10">
    <property type="entry name" value="Ribonuclease Z/Hydroxyacylglutathione hydrolase-like"/>
    <property type="match status" value="1"/>
</dbReference>
<dbReference type="HAMAP" id="MF_01312">
    <property type="entry name" value="NorV"/>
    <property type="match status" value="1"/>
</dbReference>
<dbReference type="InterPro" id="IPR023957">
    <property type="entry name" value="Anaer_NO_rdtase_flvorubredoxin"/>
</dbReference>
<dbReference type="InterPro" id="IPR008254">
    <property type="entry name" value="Flavodoxin/NO_synth"/>
</dbReference>
<dbReference type="InterPro" id="IPR029039">
    <property type="entry name" value="Flavoprotein-like_sf"/>
</dbReference>
<dbReference type="InterPro" id="IPR001279">
    <property type="entry name" value="Metallo-B-lactamas"/>
</dbReference>
<dbReference type="InterPro" id="IPR045761">
    <property type="entry name" value="ODP_dom"/>
</dbReference>
<dbReference type="InterPro" id="IPR036866">
    <property type="entry name" value="RibonucZ/Hydroxyglut_hydro"/>
</dbReference>
<dbReference type="InterPro" id="IPR024934">
    <property type="entry name" value="Rubredoxin-like_dom"/>
</dbReference>
<dbReference type="InterPro" id="IPR016440">
    <property type="entry name" value="Rubredoxin-O_OxRdtase"/>
</dbReference>
<dbReference type="InterPro" id="IPR024935">
    <property type="entry name" value="Rubredoxin_dom"/>
</dbReference>
<dbReference type="NCBIfam" id="NF003954">
    <property type="entry name" value="PRK05452.1"/>
    <property type="match status" value="1"/>
</dbReference>
<dbReference type="PANTHER" id="PTHR43717">
    <property type="entry name" value="ANAEROBIC NITRIC OXIDE REDUCTASE FLAVORUBREDOXIN"/>
    <property type="match status" value="1"/>
</dbReference>
<dbReference type="PANTHER" id="PTHR43717:SF1">
    <property type="entry name" value="ANAEROBIC NITRIC OXIDE REDUCTASE FLAVORUBREDOXIN"/>
    <property type="match status" value="1"/>
</dbReference>
<dbReference type="Pfam" id="PF00258">
    <property type="entry name" value="Flavodoxin_1"/>
    <property type="match status" value="1"/>
</dbReference>
<dbReference type="Pfam" id="PF19583">
    <property type="entry name" value="ODP"/>
    <property type="match status" value="1"/>
</dbReference>
<dbReference type="Pfam" id="PF00301">
    <property type="entry name" value="Rubredoxin"/>
    <property type="match status" value="1"/>
</dbReference>
<dbReference type="PIRSF" id="PIRSF005243">
    <property type="entry name" value="ROO"/>
    <property type="match status" value="1"/>
</dbReference>
<dbReference type="PRINTS" id="PR00163">
    <property type="entry name" value="RUBREDOXIN"/>
</dbReference>
<dbReference type="SMART" id="SM00849">
    <property type="entry name" value="Lactamase_B"/>
    <property type="match status" value="1"/>
</dbReference>
<dbReference type="SUPFAM" id="SSF52218">
    <property type="entry name" value="Flavoproteins"/>
    <property type="match status" value="1"/>
</dbReference>
<dbReference type="SUPFAM" id="SSF56281">
    <property type="entry name" value="Metallo-hydrolase/oxidoreductase"/>
    <property type="match status" value="1"/>
</dbReference>
<dbReference type="SUPFAM" id="SSF57802">
    <property type="entry name" value="Rubredoxin-like"/>
    <property type="match status" value="1"/>
</dbReference>
<dbReference type="PROSITE" id="PS50902">
    <property type="entry name" value="FLAVODOXIN_LIKE"/>
    <property type="match status" value="1"/>
</dbReference>
<dbReference type="PROSITE" id="PS50903">
    <property type="entry name" value="RUBREDOXIN_LIKE"/>
    <property type="match status" value="1"/>
</dbReference>
<keyword id="KW-0963">Cytoplasm</keyword>
<keyword id="KW-0249">Electron transport</keyword>
<keyword id="KW-0285">Flavoprotein</keyword>
<keyword id="KW-0288">FMN</keyword>
<keyword id="KW-0408">Iron</keyword>
<keyword id="KW-0479">Metal-binding</keyword>
<keyword id="KW-0560">Oxidoreductase</keyword>
<keyword id="KW-0813">Transport</keyword>